<sequence length="465" mass="52202">MATLPAAETWIDGGGGVGADAVNLTASLAAGAATGAVETGWLQLLDQAGNLSSSPSALGLPVASPAPSQPWANLTNQFVQPSWRIALWSLAYGVVVAVAVLGNLIVIWIILAHKRMRTVTNYFLVNLAFSDASMAAFNTLVNFIYALHSEWYFGANYCRFQNFFPITAVFASIYSMTAIAVDRYMAIIDPLKPRLSATATKIVIGSIWILAFLLAFPQCLYSKTKVMPGRTLCFVQWPEGPKQHFTYHIIVIILVYCFPLLIMGITYTIVGITLWGGEIPGDTCDKYHEQLKAKRKVVKMMIIVVMTFAICWLPYHIYFILTAIYQQLNRWKYIQQVYLASFWLAMSSTMYNPIIYCCLNKRFRAGFKRAFRWCPFIKVSSYDELELKTTRFHPNRQSSMYTVTRMESMTVVFDPNDADTTRSSRKKRATPRDPSFNGCSRRNSKSASATSSFISSPYTSVDEYS</sequence>
<accession>P29371</accession>
<accession>Q0P510</accession>
<organism>
    <name type="scientific">Homo sapiens</name>
    <name type="common">Human</name>
    <dbReference type="NCBI Taxonomy" id="9606"/>
    <lineage>
        <taxon>Eukaryota</taxon>
        <taxon>Metazoa</taxon>
        <taxon>Chordata</taxon>
        <taxon>Craniata</taxon>
        <taxon>Vertebrata</taxon>
        <taxon>Euteleostomi</taxon>
        <taxon>Mammalia</taxon>
        <taxon>Eutheria</taxon>
        <taxon>Euarchontoglires</taxon>
        <taxon>Primates</taxon>
        <taxon>Haplorrhini</taxon>
        <taxon>Catarrhini</taxon>
        <taxon>Hominidae</taxon>
        <taxon>Homo</taxon>
    </lineage>
</organism>
<dbReference type="EMBL" id="M89473">
    <property type="protein sequence ID" value="AAA36366.1"/>
    <property type="molecule type" value="mRNA"/>
</dbReference>
<dbReference type="EMBL" id="S86392">
    <property type="protein sequence ID" value="AAB21706.1"/>
    <property type="molecule type" value="Genomic_DNA"/>
</dbReference>
<dbReference type="EMBL" id="S86371">
    <property type="protein sequence ID" value="AAB21706.1"/>
    <property type="status" value="JOINED"/>
    <property type="molecule type" value="Genomic_DNA"/>
</dbReference>
<dbReference type="EMBL" id="S86382">
    <property type="protein sequence ID" value="AAB21706.1"/>
    <property type="status" value="JOINED"/>
    <property type="molecule type" value="Genomic_DNA"/>
</dbReference>
<dbReference type="EMBL" id="S86388">
    <property type="protein sequence ID" value="AAB21706.1"/>
    <property type="status" value="JOINED"/>
    <property type="molecule type" value="Genomic_DNA"/>
</dbReference>
<dbReference type="EMBL" id="S86390">
    <property type="protein sequence ID" value="AAB21706.1"/>
    <property type="status" value="JOINED"/>
    <property type="molecule type" value="Genomic_DNA"/>
</dbReference>
<dbReference type="EMBL" id="X65172">
    <property type="protein sequence ID" value="CAA46291.1"/>
    <property type="molecule type" value="Genomic_DNA"/>
</dbReference>
<dbReference type="EMBL" id="X65173">
    <property type="protein sequence ID" value="CAA46291.1"/>
    <property type="status" value="JOINED"/>
    <property type="molecule type" value="Genomic_DNA"/>
</dbReference>
<dbReference type="EMBL" id="X65174">
    <property type="protein sequence ID" value="CAA46291.1"/>
    <property type="status" value="JOINED"/>
    <property type="molecule type" value="Genomic_DNA"/>
</dbReference>
<dbReference type="EMBL" id="X65175">
    <property type="protein sequence ID" value="CAA46291.1"/>
    <property type="status" value="JOINED"/>
    <property type="molecule type" value="Genomic_DNA"/>
</dbReference>
<dbReference type="EMBL" id="X65176">
    <property type="protein sequence ID" value="CAA46291.1"/>
    <property type="status" value="JOINED"/>
    <property type="molecule type" value="Genomic_DNA"/>
</dbReference>
<dbReference type="EMBL" id="AY462099">
    <property type="protein sequence ID" value="AAR23926.1"/>
    <property type="molecule type" value="mRNA"/>
</dbReference>
<dbReference type="EMBL" id="BC121806">
    <property type="protein sequence ID" value="AAI21807.1"/>
    <property type="molecule type" value="mRNA"/>
</dbReference>
<dbReference type="CCDS" id="CCDS3664.1"/>
<dbReference type="PIR" id="JQ1517">
    <property type="entry name" value="JQ1517"/>
</dbReference>
<dbReference type="RefSeq" id="NP_001050.1">
    <property type="nucleotide sequence ID" value="NM_001059.3"/>
</dbReference>
<dbReference type="PDB" id="8JBF">
    <property type="method" value="EM"/>
    <property type="resolution" value="3.00 A"/>
    <property type="chains" value="B=1-394"/>
</dbReference>
<dbReference type="PDB" id="8JBG">
    <property type="method" value="EM"/>
    <property type="resolution" value="2.80 A"/>
    <property type="chains" value="B=1-394"/>
</dbReference>
<dbReference type="PDB" id="8JBH">
    <property type="method" value="EM"/>
    <property type="resolution" value="2.90 A"/>
    <property type="chains" value="B=1-394"/>
</dbReference>
<dbReference type="PDBsum" id="8JBF"/>
<dbReference type="PDBsum" id="8JBG"/>
<dbReference type="PDBsum" id="8JBH"/>
<dbReference type="EMDB" id="EMD-36144"/>
<dbReference type="SMR" id="P29371"/>
<dbReference type="BioGRID" id="112733">
    <property type="interactions" value="72"/>
</dbReference>
<dbReference type="CORUM" id="P29371"/>
<dbReference type="FunCoup" id="P29371">
    <property type="interactions" value="678"/>
</dbReference>
<dbReference type="IntAct" id="P29371">
    <property type="interactions" value="72"/>
</dbReference>
<dbReference type="STRING" id="9606.ENSP00000303325"/>
<dbReference type="BindingDB" id="P29371"/>
<dbReference type="ChEMBL" id="CHEMBL4429"/>
<dbReference type="DrugBank" id="DB18968">
    <property type="generic name" value="Elinzanetant"/>
</dbReference>
<dbReference type="DrugBank" id="DB15669">
    <property type="generic name" value="Fezolinetant"/>
</dbReference>
<dbReference type="DrugBank" id="DB04872">
    <property type="generic name" value="Osanetant"/>
</dbReference>
<dbReference type="DrugBank" id="DB11692">
    <property type="generic name" value="Pavinetant"/>
</dbReference>
<dbReference type="DrugBank" id="DB06429">
    <property type="generic name" value="Talnetant"/>
</dbReference>
<dbReference type="DrugCentral" id="P29371"/>
<dbReference type="GuidetoPHARMACOLOGY" id="362"/>
<dbReference type="GlyCosmos" id="P29371">
    <property type="glycosylation" value="3 sites, No reported glycans"/>
</dbReference>
<dbReference type="GlyGen" id="P29371">
    <property type="glycosylation" value="3 sites"/>
</dbReference>
<dbReference type="iPTMnet" id="P29371"/>
<dbReference type="PhosphoSitePlus" id="P29371"/>
<dbReference type="BioMuta" id="TACR3"/>
<dbReference type="DMDM" id="128364"/>
<dbReference type="PaxDb" id="9606-ENSP00000303325"/>
<dbReference type="TopDownProteomics" id="P29371"/>
<dbReference type="Antibodypedia" id="1543">
    <property type="antibodies" value="356 antibodies from 34 providers"/>
</dbReference>
<dbReference type="DNASU" id="6870"/>
<dbReference type="Ensembl" id="ENST00000304883.3">
    <property type="protein sequence ID" value="ENSP00000303325.2"/>
    <property type="gene ID" value="ENSG00000169836.5"/>
</dbReference>
<dbReference type="GeneID" id="6870"/>
<dbReference type="KEGG" id="hsa:6870"/>
<dbReference type="MANE-Select" id="ENST00000304883.3">
    <property type="protein sequence ID" value="ENSP00000303325.2"/>
    <property type="RefSeq nucleotide sequence ID" value="NM_001059.3"/>
    <property type="RefSeq protein sequence ID" value="NP_001050.1"/>
</dbReference>
<dbReference type="UCSC" id="uc003hxe.2">
    <property type="organism name" value="human"/>
</dbReference>
<dbReference type="AGR" id="HGNC:11528"/>
<dbReference type="CTD" id="6870"/>
<dbReference type="DisGeNET" id="6870"/>
<dbReference type="GeneCards" id="TACR3"/>
<dbReference type="GeneReviews" id="TACR3"/>
<dbReference type="HGNC" id="HGNC:11528">
    <property type="gene designation" value="TACR3"/>
</dbReference>
<dbReference type="HPA" id="ENSG00000169836">
    <property type="expression patterns" value="Group enriched (brain, retina, urinary bladder)"/>
</dbReference>
<dbReference type="MalaCards" id="TACR3"/>
<dbReference type="MIM" id="162332">
    <property type="type" value="gene"/>
</dbReference>
<dbReference type="MIM" id="614840">
    <property type="type" value="phenotype"/>
</dbReference>
<dbReference type="neXtProt" id="NX_P29371"/>
<dbReference type="OpenTargets" id="ENSG00000169836"/>
<dbReference type="Orphanet" id="478">
    <property type="disease" value="Kallmann syndrome"/>
</dbReference>
<dbReference type="Orphanet" id="432">
    <property type="disease" value="Normosmic congenital hypogonadotropic hypogonadism"/>
</dbReference>
<dbReference type="PharmGKB" id="PA36304"/>
<dbReference type="VEuPathDB" id="HostDB:ENSG00000169836"/>
<dbReference type="eggNOG" id="KOG4219">
    <property type="taxonomic scope" value="Eukaryota"/>
</dbReference>
<dbReference type="GeneTree" id="ENSGT00940000153745"/>
<dbReference type="HOGENOM" id="CLU_009579_6_1_1"/>
<dbReference type="InParanoid" id="P29371"/>
<dbReference type="OMA" id="PQCLYSI"/>
<dbReference type="OrthoDB" id="5981855at2759"/>
<dbReference type="PAN-GO" id="P29371">
    <property type="GO annotations" value="4 GO annotations based on evolutionary models"/>
</dbReference>
<dbReference type="PhylomeDB" id="P29371"/>
<dbReference type="TreeFam" id="TF315303"/>
<dbReference type="PathwayCommons" id="P29371"/>
<dbReference type="Reactome" id="R-HSA-380095">
    <property type="pathway name" value="Tachykinin receptors bind tachykinins"/>
</dbReference>
<dbReference type="Reactome" id="R-HSA-416476">
    <property type="pathway name" value="G alpha (q) signalling events"/>
</dbReference>
<dbReference type="SignaLink" id="P29371"/>
<dbReference type="SIGNOR" id="P29371"/>
<dbReference type="BioGRID-ORCS" id="6870">
    <property type="hits" value="6 hits in 1149 CRISPR screens"/>
</dbReference>
<dbReference type="ChiTaRS" id="TACR3">
    <property type="organism name" value="human"/>
</dbReference>
<dbReference type="GeneWiki" id="Tachykinin_receptor_3"/>
<dbReference type="GenomeRNAi" id="6870"/>
<dbReference type="Pharos" id="P29371">
    <property type="development level" value="Tchem"/>
</dbReference>
<dbReference type="PRO" id="PR:P29371"/>
<dbReference type="Proteomes" id="UP000005640">
    <property type="component" value="Chromosome 4"/>
</dbReference>
<dbReference type="RNAct" id="P29371">
    <property type="molecule type" value="protein"/>
</dbReference>
<dbReference type="Bgee" id="ENSG00000169836">
    <property type="expression patterns" value="Expressed in cortical plate and 31 other cell types or tissues"/>
</dbReference>
<dbReference type="GO" id="GO:0032590">
    <property type="term" value="C:dendrite membrane"/>
    <property type="evidence" value="ECO:0007669"/>
    <property type="project" value="Ensembl"/>
</dbReference>
<dbReference type="GO" id="GO:0032809">
    <property type="term" value="C:neuronal cell body membrane"/>
    <property type="evidence" value="ECO:0007669"/>
    <property type="project" value="Ensembl"/>
</dbReference>
<dbReference type="GO" id="GO:0005886">
    <property type="term" value="C:plasma membrane"/>
    <property type="evidence" value="ECO:0000318"/>
    <property type="project" value="GO_Central"/>
</dbReference>
<dbReference type="GO" id="GO:0097225">
    <property type="term" value="C:sperm midpiece"/>
    <property type="evidence" value="ECO:0000314"/>
    <property type="project" value="UniProtKB"/>
</dbReference>
<dbReference type="GO" id="GO:0004995">
    <property type="term" value="F:tachykinin receptor activity"/>
    <property type="evidence" value="ECO:0000318"/>
    <property type="project" value="GO_Central"/>
</dbReference>
<dbReference type="GO" id="GO:0045777">
    <property type="term" value="P:positive regulation of blood pressure"/>
    <property type="evidence" value="ECO:0007669"/>
    <property type="project" value="Ensembl"/>
</dbReference>
<dbReference type="GO" id="GO:1902093">
    <property type="term" value="P:positive regulation of flagellated sperm motility"/>
    <property type="evidence" value="ECO:0000315"/>
    <property type="project" value="UniProtKB"/>
</dbReference>
<dbReference type="GO" id="GO:0010460">
    <property type="term" value="P:positive regulation of heart rate"/>
    <property type="evidence" value="ECO:0007669"/>
    <property type="project" value="Ensembl"/>
</dbReference>
<dbReference type="GO" id="GO:0070474">
    <property type="term" value="P:positive regulation of uterine smooth muscle contraction"/>
    <property type="evidence" value="ECO:0007669"/>
    <property type="project" value="Ensembl"/>
</dbReference>
<dbReference type="GO" id="GO:0042053">
    <property type="term" value="P:regulation of dopamine metabolic process"/>
    <property type="evidence" value="ECO:0007669"/>
    <property type="project" value="Ensembl"/>
</dbReference>
<dbReference type="GO" id="GO:0060259">
    <property type="term" value="P:regulation of feeding behavior"/>
    <property type="evidence" value="ECO:0007669"/>
    <property type="project" value="Ensembl"/>
</dbReference>
<dbReference type="GO" id="GO:0042220">
    <property type="term" value="P:response to cocaine"/>
    <property type="evidence" value="ECO:0007669"/>
    <property type="project" value="Ensembl"/>
</dbReference>
<dbReference type="GO" id="GO:0032355">
    <property type="term" value="P:response to estradiol"/>
    <property type="evidence" value="ECO:0007669"/>
    <property type="project" value="Ensembl"/>
</dbReference>
<dbReference type="GO" id="GO:0007217">
    <property type="term" value="P:tachykinin receptor signaling pathway"/>
    <property type="evidence" value="ECO:0000304"/>
    <property type="project" value="ProtInc"/>
</dbReference>
<dbReference type="CDD" id="cd16003">
    <property type="entry name" value="7tmA_NKR_NK3R"/>
    <property type="match status" value="1"/>
</dbReference>
<dbReference type="FunFam" id="1.20.1070.10:FF:000078">
    <property type="entry name" value="Neuromedin-K receptor"/>
    <property type="match status" value="1"/>
</dbReference>
<dbReference type="Gene3D" id="1.20.1070.10">
    <property type="entry name" value="Rhodopsin 7-helix transmembrane proteins"/>
    <property type="match status" value="1"/>
</dbReference>
<dbReference type="InterPro" id="IPR000276">
    <property type="entry name" value="GPCR_Rhodpsn"/>
</dbReference>
<dbReference type="InterPro" id="IPR017452">
    <property type="entry name" value="GPCR_Rhodpsn_7TM"/>
</dbReference>
<dbReference type="InterPro" id="IPR001681">
    <property type="entry name" value="Neurokn_rcpt"/>
</dbReference>
<dbReference type="InterPro" id="IPR001013">
    <property type="entry name" value="NK3_rcpt"/>
</dbReference>
<dbReference type="PANTHER" id="PTHR46925">
    <property type="entry name" value="G-PROTEIN COUPLED RECEPTOR TKR-1-RELATED"/>
    <property type="match status" value="1"/>
</dbReference>
<dbReference type="PANTHER" id="PTHR46925:SF1">
    <property type="entry name" value="NEUROMEDIN-K RECEPTOR"/>
    <property type="match status" value="1"/>
</dbReference>
<dbReference type="Pfam" id="PF00001">
    <property type="entry name" value="7tm_1"/>
    <property type="match status" value="1"/>
</dbReference>
<dbReference type="PRINTS" id="PR00237">
    <property type="entry name" value="GPCRRHODOPSN"/>
</dbReference>
<dbReference type="PRINTS" id="PR01026">
    <property type="entry name" value="NEUROKININ3R"/>
</dbReference>
<dbReference type="PRINTS" id="PR00244">
    <property type="entry name" value="NEUROKININR"/>
</dbReference>
<dbReference type="SUPFAM" id="SSF81321">
    <property type="entry name" value="Family A G protein-coupled receptor-like"/>
    <property type="match status" value="1"/>
</dbReference>
<dbReference type="PROSITE" id="PS00237">
    <property type="entry name" value="G_PROTEIN_RECEP_F1_1"/>
    <property type="match status" value="1"/>
</dbReference>
<dbReference type="PROSITE" id="PS50262">
    <property type="entry name" value="G_PROTEIN_RECEP_F1_2"/>
    <property type="match status" value="1"/>
</dbReference>
<evidence type="ECO:0000255" key="1"/>
<evidence type="ECO:0000255" key="2">
    <source>
        <dbReference type="PROSITE-ProRule" id="PRU00521"/>
    </source>
</evidence>
<evidence type="ECO:0000256" key="3">
    <source>
        <dbReference type="SAM" id="MobiDB-lite"/>
    </source>
</evidence>
<evidence type="ECO:0000269" key="4">
    <source>
    </source>
</evidence>
<evidence type="ECO:0000269" key="5">
    <source>
    </source>
</evidence>
<evidence type="ECO:0000269" key="6">
    <source>
    </source>
</evidence>
<evidence type="ECO:0000305" key="7"/>
<feature type="chain" id="PRO_0000069899" description="Neuromedin-K receptor">
    <location>
        <begin position="1"/>
        <end position="465"/>
    </location>
</feature>
<feature type="topological domain" description="Extracellular" evidence="1">
    <location>
        <begin position="1"/>
        <end position="84"/>
    </location>
</feature>
<feature type="transmembrane region" description="Helical; Name=1" evidence="1">
    <location>
        <begin position="85"/>
        <end position="107"/>
    </location>
</feature>
<feature type="topological domain" description="Cytoplasmic" evidence="1">
    <location>
        <begin position="108"/>
        <end position="117"/>
    </location>
</feature>
<feature type="transmembrane region" description="Helical; Name=2" evidence="1">
    <location>
        <begin position="118"/>
        <end position="139"/>
    </location>
</feature>
<feature type="topological domain" description="Extracellular" evidence="1">
    <location>
        <begin position="140"/>
        <end position="159"/>
    </location>
</feature>
<feature type="transmembrane region" description="Helical; Name=3" evidence="1">
    <location>
        <begin position="160"/>
        <end position="181"/>
    </location>
</feature>
<feature type="topological domain" description="Cytoplasmic" evidence="1">
    <location>
        <begin position="182"/>
        <end position="201"/>
    </location>
</feature>
<feature type="transmembrane region" description="Helical; Name=4" evidence="1">
    <location>
        <begin position="202"/>
        <end position="222"/>
    </location>
</feature>
<feature type="topological domain" description="Extracellular" evidence="1">
    <location>
        <begin position="223"/>
        <end position="245"/>
    </location>
</feature>
<feature type="transmembrane region" description="Helical; Name=5" evidence="1">
    <location>
        <begin position="246"/>
        <end position="270"/>
    </location>
</feature>
<feature type="topological domain" description="Cytoplasmic" evidence="1">
    <location>
        <begin position="271"/>
        <end position="299"/>
    </location>
</feature>
<feature type="transmembrane region" description="Helical; Name=6" evidence="1">
    <location>
        <begin position="300"/>
        <end position="321"/>
    </location>
</feature>
<feature type="topological domain" description="Extracellular" evidence="1">
    <location>
        <begin position="322"/>
        <end position="334"/>
    </location>
</feature>
<feature type="transmembrane region" description="Helical; Name=7" evidence="1">
    <location>
        <begin position="335"/>
        <end position="359"/>
    </location>
</feature>
<feature type="topological domain" description="Cytoplasmic" evidence="1">
    <location>
        <begin position="360"/>
        <end position="465"/>
    </location>
</feature>
<feature type="region of interest" description="Disordered" evidence="3">
    <location>
        <begin position="415"/>
        <end position="465"/>
    </location>
</feature>
<feature type="compositionally biased region" description="Low complexity" evidence="3">
    <location>
        <begin position="445"/>
        <end position="465"/>
    </location>
</feature>
<feature type="lipid moiety-binding region" description="S-palmitoyl cysteine" evidence="1">
    <location>
        <position position="374"/>
    </location>
</feature>
<feature type="glycosylation site" description="N-linked (GlcNAc...) asparagine" evidence="1">
    <location>
        <position position="23"/>
    </location>
</feature>
<feature type="glycosylation site" description="N-linked (GlcNAc...) asparagine" evidence="1">
    <location>
        <position position="50"/>
    </location>
</feature>
<feature type="glycosylation site" description="N-linked (GlcNAc...) asparagine" evidence="1">
    <location>
        <position position="73"/>
    </location>
</feature>
<feature type="disulfide bond" evidence="2">
    <location>
        <begin position="158"/>
        <end position="233"/>
    </location>
</feature>
<feature type="sequence variant" id="VAR_069177" description="In HH11; unequivocal evidence of impaired receptor signaling; dbSNP:rs121918124." evidence="4">
    <original>G</original>
    <variation>D</variation>
    <location>
        <position position="93"/>
    </location>
</feature>
<feature type="sequence variant" id="VAR_072976" description="In HH11; dbSNP:rs1723155794." evidence="6">
    <original>F</original>
    <variation>V</variation>
    <location>
        <position position="137"/>
    </location>
</feature>
<feature type="sequence variant" id="VAR_049422" description="May contribute to hypogonadotropic hypogonadism in patients carrying disease-causing mutations in FGFR1; dbSNP:rs2276973." evidence="5">
    <original>K</original>
    <variation>R</variation>
    <location>
        <position position="286"/>
    </location>
</feature>
<feature type="sequence variant" id="VAR_072977" description="In HH11; dbSNP:rs200148989." evidence="6">
    <original>M</original>
    <variation>V</variation>
    <location>
        <position position="346"/>
    </location>
</feature>
<feature type="sequence variant" id="VAR_069178" description="In HH11; unequivocal evidence of impaired receptor signaling; dbSNP:rs121918125." evidence="4">
    <original>P</original>
    <variation>S</variation>
    <location>
        <position position="353"/>
    </location>
</feature>
<feature type="sequence variant" id="VAR_069963" description="In HH11; the patient also carries a mutation in FGFR1; dbSNP:rs150288991." evidence="5">
    <original>R</original>
    <variation>Q</variation>
    <location>
        <position position="364"/>
    </location>
</feature>
<feature type="sequence variant" id="VAR_049423" description="May contribute to hypogonadotropic hypogonadism in patients carrying disease-causing mutations in SPRY4 or KAL1; dbSNP:rs17033889." evidence="5">
    <original>A</original>
    <variation>T</variation>
    <location>
        <position position="449"/>
    </location>
</feature>
<feature type="sequence conflict" description="In Ref. 2; AAB21706." evidence="7" ref="2">
    <original>T</original>
    <variation>I</variation>
    <location>
        <position position="3"/>
    </location>
</feature>
<feature type="sequence conflict" description="In Ref. 2; AAB21706." evidence="7" ref="2">
    <original>A</original>
    <variation>R</variation>
    <location>
        <position position="63"/>
    </location>
</feature>
<feature type="sequence conflict" description="In Ref. 3; CAA46291." evidence="7" ref="3">
    <original>C</original>
    <variation>F</variation>
    <location>
        <position position="439"/>
    </location>
</feature>
<comment type="function">
    <text>This is a receptor for the tachykinin neuropeptide neuromedin-K (neurokinin B). It is associated with G proteins that activate a phosphatidylinositol-calcium second messenger system. The rank order of affinity of this receptor to tachykinins is: neuromedin-K &gt; substance K &gt; substance P.</text>
</comment>
<comment type="interaction">
    <interactant intactId="EBI-6655576">
        <id>P29371</id>
    </interactant>
    <interactant intactId="EBI-6655626">
        <id>PRO_0000033566</id>
        <label>TAC3</label>
        <dbReference type="UniProtKB" id="Q9UHF0"/>
    </interactant>
    <organismsDiffer>false</organismsDiffer>
    <experiments>2</experiments>
</comment>
<comment type="subcellular location">
    <subcellularLocation>
        <location>Cell membrane</location>
        <topology>Multi-pass membrane protein</topology>
    </subcellularLocation>
</comment>
<comment type="PTM">
    <text>The anchoring of this receptor to the plasma membrane is probably mediated by the palmitoylation of a cysteine residue.</text>
</comment>
<comment type="disease" evidence="4 5 6">
    <disease id="DI-03571">
        <name>Hypogonadotropic hypogonadism 11 with or without anosmia</name>
        <acronym>HH11</acronym>
        <description>A disorder characterized by absent or incomplete sexual maturation by the age of 18 years, in conjunction with low levels of circulating gonadotropins and testosterone and no other abnormalities of the hypothalamic-pituitary axis. In some cases, it is associated with non-reproductive phenotypes, such as anosmia, cleft palate, and sensorineural hearing loss. Anosmia or hyposmia is related to the absence or hypoplasia of the olfactory bulbs and tracts. Hypogonadism is due to deficiency in gonadotropin-releasing hormone and probably results from a failure of embryonic migration of gonadotropin-releasing hormone-synthesizing neurons. In the presence of anosmia, idiopathic hypogonadotropic hypogonadism is referred to as Kallmann syndrome, whereas in the presence of a normal sense of smell, it has been termed normosmic idiopathic hypogonadotropic hypogonadism (nIHH).</description>
        <dbReference type="MIM" id="614840"/>
    </disease>
    <text evidence="5">The disease is caused by variants affecting distinct genetic loci, including the gene represented in this entry. The genetics of hypogonadotropic hypogonadism involves various modes of transmission. Oligogenic inheritance has been reported in some patients carrying mutations in TACR3 as well as in other HH-associated genes including FGFR1, SPRY4 and KAL1 (PubMed:23643382).</text>
</comment>
<comment type="similarity">
    <text evidence="2">Belongs to the G-protein coupled receptor 1 family.</text>
</comment>
<gene>
    <name type="primary">TACR3</name>
    <name type="synonym">NK3R</name>
    <name type="synonym">TAC3R</name>
</gene>
<keyword id="KW-0002">3D-structure</keyword>
<keyword id="KW-1003">Cell membrane</keyword>
<keyword id="KW-0225">Disease variant</keyword>
<keyword id="KW-1015">Disulfide bond</keyword>
<keyword id="KW-0297">G-protein coupled receptor</keyword>
<keyword id="KW-0325">Glycoprotein</keyword>
<keyword id="KW-1016">Hypogonadotropic hypogonadism</keyword>
<keyword id="KW-0449">Lipoprotein</keyword>
<keyword id="KW-0472">Membrane</keyword>
<keyword id="KW-0564">Palmitate</keyword>
<keyword id="KW-0675">Receptor</keyword>
<keyword id="KW-1185">Reference proteome</keyword>
<keyword id="KW-0807">Transducer</keyword>
<keyword id="KW-0812">Transmembrane</keyword>
<keyword id="KW-1133">Transmembrane helix</keyword>
<proteinExistence type="evidence at protein level"/>
<protein>
    <recommendedName>
        <fullName>Neuromedin-K receptor</fullName>
        <shortName>NKR</shortName>
    </recommendedName>
    <alternativeName>
        <fullName>NK-3 receptor</fullName>
        <shortName>NK-3R</shortName>
    </alternativeName>
    <alternativeName>
        <fullName>Neurokinin B receptor</fullName>
    </alternativeName>
    <alternativeName>
        <fullName>Tachykinin receptor 3</fullName>
    </alternativeName>
</protein>
<reference key="1">
    <citation type="journal article" date="1992" name="Biochem. Biophys. Res. Commun.">
        <title>cDNA sequence and heterologous expression of the human neurokinin-3 receptor.</title>
        <authorList>
            <person name="Huang R.-R.C."/>
            <person name="Cheung A.H."/>
            <person name="Mazina K.E."/>
            <person name="Strader C.D."/>
            <person name="Fong T.M."/>
        </authorList>
    </citation>
    <scope>NUCLEOTIDE SEQUENCE [MRNA]</scope>
    <source>
        <tissue>Brain</tissue>
    </source>
</reference>
<reference key="2">
    <citation type="journal article" date="1992" name="FEBS Lett.">
        <title>Molecular characterisation, expression and localisation of human neurokinin-3 receptor.</title>
        <authorList>
            <person name="Buell G."/>
            <person name="Schulz M.F."/>
            <person name="Arkinstall S.J."/>
            <person name="Maury K."/>
            <person name="Missotten M."/>
            <person name="Adami N."/>
            <person name="Talabot F."/>
            <person name="Kawashima E."/>
        </authorList>
    </citation>
    <scope>NUCLEOTIDE SEQUENCE [GENOMIC DNA]</scope>
</reference>
<reference key="3">
    <citation type="journal article" date="1992" name="Eur. J. Biochem.">
        <title>The primary structure and gene organization of human substance P and neuromedin K receptors.</title>
        <authorList>
            <person name="Takahashi K."/>
            <person name="Tanaka A."/>
            <person name="Hara M."/>
            <person name="Nakanishi S."/>
        </authorList>
    </citation>
    <scope>NUCLEOTIDE SEQUENCE [GENOMIC DNA]</scope>
    <source>
        <tissue>Placenta</tissue>
    </source>
</reference>
<reference key="4">
    <citation type="submission" date="2003-11" db="EMBL/GenBank/DDBJ databases">
        <title>cDNA clones of human proteins involved in signal transduction sequenced by the Guthrie cDNA resource center (www.cdna.org).</title>
        <authorList>
            <person name="Kopatz S.A."/>
            <person name="Aronstam R.S."/>
            <person name="Sharma S.V."/>
        </authorList>
    </citation>
    <scope>NUCLEOTIDE SEQUENCE [LARGE SCALE MRNA]</scope>
    <source>
        <tissue>Brain</tissue>
    </source>
</reference>
<reference key="5">
    <citation type="journal article" date="2004" name="Genome Res.">
        <title>The status, quality, and expansion of the NIH full-length cDNA project: the Mammalian Gene Collection (MGC).</title>
        <authorList>
            <consortium name="The MGC Project Team"/>
        </authorList>
    </citation>
    <scope>NUCLEOTIDE SEQUENCE [LARGE SCALE MRNA]</scope>
</reference>
<reference key="6">
    <citation type="journal article" date="2009" name="Nat. Genet.">
        <title>TAC3 and TACR3 mutations in familial hypogonadotropic hypogonadism reveal a key role for Neurokinin B in the central control of reproduction.</title>
        <authorList>
            <person name="Topaloglu A.K."/>
            <person name="Reimann F."/>
            <person name="Guclu M."/>
            <person name="Yalin A.S."/>
            <person name="Kotan L.D."/>
            <person name="Porter K.M."/>
            <person name="Serin A."/>
            <person name="Mungan N.O."/>
            <person name="Cook J.R."/>
            <person name="Ozbek M.N."/>
            <person name="Imamoglu S."/>
            <person name="Akalin N.S."/>
            <person name="Yuksel B."/>
            <person name="O'Rahilly S."/>
            <person name="Semple R.K."/>
        </authorList>
    </citation>
    <scope>VARIANTS HH11 ASP-93 AND SER-353</scope>
    <scope>CHARACTERIZATION OF VARIANTS HH11 ASP-93 AND SER-353</scope>
</reference>
<reference key="7">
    <citation type="journal article" date="2013" name="Am. J. Hum. Genet.">
        <title>Mutations in FGF17, IL17RD, DUSP6, SPRY4, and FLRT3 are identified in individuals with congenital hypogonadotropic hypogonadism.</title>
        <authorList>
            <person name="Miraoui H."/>
            <person name="Dwyer A.A."/>
            <person name="Sykiotis G.P."/>
            <person name="Plummer L."/>
            <person name="Chung W."/>
            <person name="Feng B."/>
            <person name="Beenken A."/>
            <person name="Clarke J."/>
            <person name="Pers T.H."/>
            <person name="Dworzynski P."/>
            <person name="Keefe K."/>
            <person name="Niedziela M."/>
            <person name="Raivio T."/>
            <person name="Crowley W.F. Jr."/>
            <person name="Seminara S.B."/>
            <person name="Quinton R."/>
            <person name="Hughes V.A."/>
            <person name="Kumanov P."/>
            <person name="Young J."/>
            <person name="Yialamas M.A."/>
            <person name="Hall J.E."/>
            <person name="Van Vliet G."/>
            <person name="Chanoine J.P."/>
            <person name="Rubenstein J."/>
            <person name="Mohammadi M."/>
            <person name="Tsai P.S."/>
            <person name="Sidis Y."/>
            <person name="Lage K."/>
            <person name="Pitteloud N."/>
        </authorList>
    </citation>
    <scope>VARIANT HH11 GLN-364</scope>
    <scope>VARIANTS ARG-286 AND THR-449</scope>
</reference>
<reference key="8">
    <citation type="journal article" date="2014" name="J. Clin. Endocrinol. Metab.">
        <title>The prevalence of CHD7 missense versus truncating mutations is higher in patients with Kallmann syndrome than in typical CHARGE patients.</title>
        <authorList>
            <person name="Marcos S."/>
            <person name="Sarfati J."/>
            <person name="Leroy C."/>
            <person name="Fouveaut C."/>
            <person name="Parent P."/>
            <person name="Metz C."/>
            <person name="Wolczynski S."/>
            <person name="Gerard M."/>
            <person name="Bieth E."/>
            <person name="Kurtz F."/>
            <person name="Verier-Mine O."/>
            <person name="Perrin L."/>
            <person name="Archambeaud F."/>
            <person name="Cabrol S."/>
            <person name="Rodien P."/>
            <person name="Hove H."/>
            <person name="Prescott T."/>
            <person name="Lacombe D."/>
            <person name="Christin-Maitre S."/>
            <person name="Touraine P."/>
            <person name="Hieronimus S."/>
            <person name="Dewailly D."/>
            <person name="Young J."/>
            <person name="Pugeat M."/>
            <person name="Hardelin J.P."/>
            <person name="Dode C."/>
        </authorList>
    </citation>
    <scope>VARIANTS HH11 VAL-137 AND VAL-346</scope>
</reference>
<name>NK3R_HUMAN</name>